<reference key="1">
    <citation type="journal article" date="2008" name="Chem. Biol. Interact.">
        <title>Extending the Bacillus cereus group genomics to putative food-borne pathogens of different toxicity.</title>
        <authorList>
            <person name="Lapidus A."/>
            <person name="Goltsman E."/>
            <person name="Auger S."/>
            <person name="Galleron N."/>
            <person name="Segurens B."/>
            <person name="Dossat C."/>
            <person name="Land M.L."/>
            <person name="Broussolle V."/>
            <person name="Brillard J."/>
            <person name="Guinebretiere M.-H."/>
            <person name="Sanchis V."/>
            <person name="Nguen-the C."/>
            <person name="Lereclus D."/>
            <person name="Richardson P."/>
            <person name="Wincker P."/>
            <person name="Weissenbach J."/>
            <person name="Ehrlich S.D."/>
            <person name="Sorokin A."/>
        </authorList>
    </citation>
    <scope>NUCLEOTIDE SEQUENCE [LARGE SCALE GENOMIC DNA]</scope>
    <source>
        <strain>KBAB4</strain>
    </source>
</reference>
<dbReference type="EC" id="2.7.11.1" evidence="1"/>
<dbReference type="EMBL" id="CP000903">
    <property type="protein sequence ID" value="ABY42155.1"/>
    <property type="molecule type" value="Genomic_DNA"/>
</dbReference>
<dbReference type="RefSeq" id="WP_012260477.1">
    <property type="nucleotide sequence ID" value="NC_010184.1"/>
</dbReference>
<dbReference type="SMR" id="A9VHG0"/>
<dbReference type="KEGG" id="bwe:BcerKBAB4_0902"/>
<dbReference type="eggNOG" id="COG2172">
    <property type="taxonomic scope" value="Bacteria"/>
</dbReference>
<dbReference type="HOGENOM" id="CLU_090336_11_1_9"/>
<dbReference type="Proteomes" id="UP000002154">
    <property type="component" value="Chromosome"/>
</dbReference>
<dbReference type="GO" id="GO:0005524">
    <property type="term" value="F:ATP binding"/>
    <property type="evidence" value="ECO:0007669"/>
    <property type="project" value="UniProtKB-KW"/>
</dbReference>
<dbReference type="GO" id="GO:0106310">
    <property type="term" value="F:protein serine kinase activity"/>
    <property type="evidence" value="ECO:0007669"/>
    <property type="project" value="RHEA"/>
</dbReference>
<dbReference type="GO" id="GO:0004674">
    <property type="term" value="F:protein serine/threonine kinase activity"/>
    <property type="evidence" value="ECO:0007669"/>
    <property type="project" value="UniProtKB-KW"/>
</dbReference>
<dbReference type="GO" id="GO:0016989">
    <property type="term" value="F:sigma factor antagonist activity"/>
    <property type="evidence" value="ECO:0007669"/>
    <property type="project" value="InterPro"/>
</dbReference>
<dbReference type="CDD" id="cd16936">
    <property type="entry name" value="HATPase_RsbW-like"/>
    <property type="match status" value="1"/>
</dbReference>
<dbReference type="FunFam" id="3.30.565.10:FF:000026">
    <property type="entry name" value="Serine-protein kinase RsbW"/>
    <property type="match status" value="1"/>
</dbReference>
<dbReference type="Gene3D" id="3.30.565.10">
    <property type="entry name" value="Histidine kinase-like ATPase, C-terminal domain"/>
    <property type="match status" value="1"/>
</dbReference>
<dbReference type="HAMAP" id="MF_00638">
    <property type="entry name" value="Anti_sigma_B"/>
    <property type="match status" value="1"/>
</dbReference>
<dbReference type="InterPro" id="IPR050267">
    <property type="entry name" value="Anti-sigma-factor_SerPK"/>
</dbReference>
<dbReference type="InterPro" id="IPR036890">
    <property type="entry name" value="HATPase_C_sf"/>
</dbReference>
<dbReference type="InterPro" id="IPR010193">
    <property type="entry name" value="RsbW"/>
</dbReference>
<dbReference type="NCBIfam" id="NF003144">
    <property type="entry name" value="PRK04069.1"/>
    <property type="match status" value="1"/>
</dbReference>
<dbReference type="NCBIfam" id="TIGR01924">
    <property type="entry name" value="rsbW_low_gc"/>
    <property type="match status" value="1"/>
</dbReference>
<dbReference type="PANTHER" id="PTHR35526">
    <property type="entry name" value="ANTI-SIGMA-F FACTOR RSBW-RELATED"/>
    <property type="match status" value="1"/>
</dbReference>
<dbReference type="PANTHER" id="PTHR35526:SF9">
    <property type="entry name" value="SERINE-PROTEIN KINASE RSBW"/>
    <property type="match status" value="1"/>
</dbReference>
<dbReference type="Pfam" id="PF13581">
    <property type="entry name" value="HATPase_c_2"/>
    <property type="match status" value="1"/>
</dbReference>
<dbReference type="SUPFAM" id="SSF55874">
    <property type="entry name" value="ATPase domain of HSP90 chaperone/DNA topoisomerase II/histidine kinase"/>
    <property type="match status" value="1"/>
</dbReference>
<sequence>MMEKFEKIEMKIPAKAEYVAIIRLTMAGVANRMGFAYDDMEDMKIAISEACTNIVQHAYKEDVGEITIVFGLYEDRLEIMVADNGVSFNFSTLKSKVGPYDINKPVEHLPENGLGLYLINTLMDDIQIMHDEGMTVLMTKYIQREQVENDGNPISTYRSY</sequence>
<comment type="function">
    <text evidence="1">Negative regulator of sigma-B activity. Phosphorylates and inactivates its specific antagonist protein, RsbV. Upon phosphorylation of RsbV, RsbW is released and binds to sigma-B, thereby blocking its ability to form an RNA polymerase holoenzyme (E-sigma-B).</text>
</comment>
<comment type="catalytic activity">
    <reaction evidence="1">
        <text>L-seryl-[protein] + ATP = O-phospho-L-seryl-[protein] + ADP + H(+)</text>
        <dbReference type="Rhea" id="RHEA:17989"/>
        <dbReference type="Rhea" id="RHEA-COMP:9863"/>
        <dbReference type="Rhea" id="RHEA-COMP:11604"/>
        <dbReference type="ChEBI" id="CHEBI:15378"/>
        <dbReference type="ChEBI" id="CHEBI:29999"/>
        <dbReference type="ChEBI" id="CHEBI:30616"/>
        <dbReference type="ChEBI" id="CHEBI:83421"/>
        <dbReference type="ChEBI" id="CHEBI:456216"/>
        <dbReference type="EC" id="2.7.11.1"/>
    </reaction>
</comment>
<comment type="catalytic activity">
    <reaction evidence="1">
        <text>L-threonyl-[protein] + ATP = O-phospho-L-threonyl-[protein] + ADP + H(+)</text>
        <dbReference type="Rhea" id="RHEA:46608"/>
        <dbReference type="Rhea" id="RHEA-COMP:11060"/>
        <dbReference type="Rhea" id="RHEA-COMP:11605"/>
        <dbReference type="ChEBI" id="CHEBI:15378"/>
        <dbReference type="ChEBI" id="CHEBI:30013"/>
        <dbReference type="ChEBI" id="CHEBI:30616"/>
        <dbReference type="ChEBI" id="CHEBI:61977"/>
        <dbReference type="ChEBI" id="CHEBI:456216"/>
        <dbReference type="EC" id="2.7.11.1"/>
    </reaction>
</comment>
<comment type="similarity">
    <text evidence="1">Belongs to the anti-sigma-factor family.</text>
</comment>
<accession>A9VHG0</accession>
<proteinExistence type="inferred from homology"/>
<gene>
    <name evidence="1" type="primary">rsbW</name>
    <name type="ordered locus">BcerKBAB4_0902</name>
</gene>
<name>RSBW_BACMK</name>
<feature type="chain" id="PRO_1000130818" description="Serine-protein kinase RsbW">
    <location>
        <begin position="1"/>
        <end position="160"/>
    </location>
</feature>
<protein>
    <recommendedName>
        <fullName evidence="1">Serine-protein kinase RsbW</fullName>
        <ecNumber evidence="1">2.7.11.1</ecNumber>
    </recommendedName>
    <alternativeName>
        <fullName evidence="1">Anti-sigma-B factor</fullName>
    </alternativeName>
    <alternativeName>
        <fullName evidence="1">Sigma-B negative effector RsbW</fullName>
    </alternativeName>
</protein>
<evidence type="ECO:0000255" key="1">
    <source>
        <dbReference type="HAMAP-Rule" id="MF_00638"/>
    </source>
</evidence>
<keyword id="KW-0067">ATP-binding</keyword>
<keyword id="KW-0418">Kinase</keyword>
<keyword id="KW-0547">Nucleotide-binding</keyword>
<keyword id="KW-0723">Serine/threonine-protein kinase</keyword>
<keyword id="KW-0808">Transferase</keyword>
<organism>
    <name type="scientific">Bacillus mycoides (strain KBAB4)</name>
    <name type="common">Bacillus weihenstephanensis</name>
    <dbReference type="NCBI Taxonomy" id="315730"/>
    <lineage>
        <taxon>Bacteria</taxon>
        <taxon>Bacillati</taxon>
        <taxon>Bacillota</taxon>
        <taxon>Bacilli</taxon>
        <taxon>Bacillales</taxon>
        <taxon>Bacillaceae</taxon>
        <taxon>Bacillus</taxon>
        <taxon>Bacillus cereus group</taxon>
    </lineage>
</organism>